<sequence>MNDLKLDKVSKVLKEVRKSVPLVHCITNYVTINDCANILLSYGASPAMCEAYDEVFDFVKISSALYINIGTFTREQESSAILAAVSAKTHNIPVVLDPVACAAIPKKIQFIDKLFKVGRVDVIKGNIGEIKFLAGETSNVKGVDSLEDGEGALECSRILSEKYNCVVAATGKKDFIVQGKNSAIIENGTEMLTNITGAGCMLGALCAAACGAFEDKFMAVVGAILSINIASEEAYKEAKAPGSFRVKLIDCIYELSEEKLKKEGKIAWN</sequence>
<name>THIM_CLOK5</name>
<keyword id="KW-0067">ATP-binding</keyword>
<keyword id="KW-0418">Kinase</keyword>
<keyword id="KW-0460">Magnesium</keyword>
<keyword id="KW-0479">Metal-binding</keyword>
<keyword id="KW-0547">Nucleotide-binding</keyword>
<keyword id="KW-1185">Reference proteome</keyword>
<keyword id="KW-0784">Thiamine biosynthesis</keyword>
<keyword id="KW-0808">Transferase</keyword>
<reference key="1">
    <citation type="journal article" date="2008" name="Proc. Natl. Acad. Sci. U.S.A.">
        <title>The genome of Clostridium kluyveri, a strict anaerobe with unique metabolic features.</title>
        <authorList>
            <person name="Seedorf H."/>
            <person name="Fricke W.F."/>
            <person name="Veith B."/>
            <person name="Brueggemann H."/>
            <person name="Liesegang H."/>
            <person name="Strittmatter A."/>
            <person name="Miethke M."/>
            <person name="Buckel W."/>
            <person name="Hinderberger J."/>
            <person name="Li F."/>
            <person name="Hagemeier C."/>
            <person name="Thauer R.K."/>
            <person name="Gottschalk G."/>
        </authorList>
    </citation>
    <scope>NUCLEOTIDE SEQUENCE [LARGE SCALE GENOMIC DNA]</scope>
    <source>
        <strain>ATCC 8527 / DSM 555 / NBRC 12016 / NCIMB 10680 / K1</strain>
    </source>
</reference>
<organism>
    <name type="scientific">Clostridium kluyveri (strain ATCC 8527 / DSM 555 / NBRC 12016 / NCIMB 10680 / K1)</name>
    <dbReference type="NCBI Taxonomy" id="431943"/>
    <lineage>
        <taxon>Bacteria</taxon>
        <taxon>Bacillati</taxon>
        <taxon>Bacillota</taxon>
        <taxon>Clostridia</taxon>
        <taxon>Eubacteriales</taxon>
        <taxon>Clostridiaceae</taxon>
        <taxon>Clostridium</taxon>
    </lineage>
</organism>
<protein>
    <recommendedName>
        <fullName evidence="1">Hydroxyethylthiazole kinase</fullName>
        <ecNumber evidence="1">2.7.1.50</ecNumber>
    </recommendedName>
    <alternativeName>
        <fullName evidence="1">4-methyl-5-beta-hydroxyethylthiazole kinase</fullName>
        <shortName evidence="1">TH kinase</shortName>
        <shortName evidence="1">Thz kinase</shortName>
    </alternativeName>
</protein>
<proteinExistence type="inferred from homology"/>
<gene>
    <name evidence="1" type="primary">thiM</name>
    <name type="ordered locus">CKL_2918</name>
</gene>
<dbReference type="EC" id="2.7.1.50" evidence="1"/>
<dbReference type="EMBL" id="CP000673">
    <property type="protein sequence ID" value="EDK34929.1"/>
    <property type="molecule type" value="Genomic_DNA"/>
</dbReference>
<dbReference type="RefSeq" id="WP_012103262.1">
    <property type="nucleotide sequence ID" value="NC_009706.1"/>
</dbReference>
<dbReference type="SMR" id="A5N1D3"/>
<dbReference type="STRING" id="431943.CKL_2918"/>
<dbReference type="KEGG" id="ckl:CKL_2918"/>
<dbReference type="eggNOG" id="COG2145">
    <property type="taxonomic scope" value="Bacteria"/>
</dbReference>
<dbReference type="HOGENOM" id="CLU_019943_0_0_9"/>
<dbReference type="UniPathway" id="UPA00060">
    <property type="reaction ID" value="UER00139"/>
</dbReference>
<dbReference type="Proteomes" id="UP000002411">
    <property type="component" value="Chromosome"/>
</dbReference>
<dbReference type="GO" id="GO:0005524">
    <property type="term" value="F:ATP binding"/>
    <property type="evidence" value="ECO:0007669"/>
    <property type="project" value="UniProtKB-UniRule"/>
</dbReference>
<dbReference type="GO" id="GO:0004417">
    <property type="term" value="F:hydroxyethylthiazole kinase activity"/>
    <property type="evidence" value="ECO:0007669"/>
    <property type="project" value="UniProtKB-UniRule"/>
</dbReference>
<dbReference type="GO" id="GO:0000287">
    <property type="term" value="F:magnesium ion binding"/>
    <property type="evidence" value="ECO:0007669"/>
    <property type="project" value="UniProtKB-UniRule"/>
</dbReference>
<dbReference type="GO" id="GO:0009228">
    <property type="term" value="P:thiamine biosynthetic process"/>
    <property type="evidence" value="ECO:0007669"/>
    <property type="project" value="UniProtKB-KW"/>
</dbReference>
<dbReference type="GO" id="GO:0009229">
    <property type="term" value="P:thiamine diphosphate biosynthetic process"/>
    <property type="evidence" value="ECO:0007669"/>
    <property type="project" value="UniProtKB-UniRule"/>
</dbReference>
<dbReference type="CDD" id="cd01170">
    <property type="entry name" value="THZ_kinase"/>
    <property type="match status" value="1"/>
</dbReference>
<dbReference type="Gene3D" id="3.40.1190.20">
    <property type="match status" value="1"/>
</dbReference>
<dbReference type="HAMAP" id="MF_00228">
    <property type="entry name" value="Thz_kinase"/>
    <property type="match status" value="1"/>
</dbReference>
<dbReference type="InterPro" id="IPR000417">
    <property type="entry name" value="Hyethyz_kinase"/>
</dbReference>
<dbReference type="InterPro" id="IPR029056">
    <property type="entry name" value="Ribokinase-like"/>
</dbReference>
<dbReference type="NCBIfam" id="NF006830">
    <property type="entry name" value="PRK09355.1"/>
    <property type="match status" value="1"/>
</dbReference>
<dbReference type="NCBIfam" id="TIGR00694">
    <property type="entry name" value="thiM"/>
    <property type="match status" value="1"/>
</dbReference>
<dbReference type="Pfam" id="PF02110">
    <property type="entry name" value="HK"/>
    <property type="match status" value="1"/>
</dbReference>
<dbReference type="PIRSF" id="PIRSF000513">
    <property type="entry name" value="Thz_kinase"/>
    <property type="match status" value="1"/>
</dbReference>
<dbReference type="PRINTS" id="PR01099">
    <property type="entry name" value="HYETHTZKNASE"/>
</dbReference>
<dbReference type="SUPFAM" id="SSF53613">
    <property type="entry name" value="Ribokinase-like"/>
    <property type="match status" value="1"/>
</dbReference>
<comment type="function">
    <text evidence="1">Catalyzes the phosphorylation of the hydroxyl group of 4-methyl-5-beta-hydroxyethylthiazole (THZ).</text>
</comment>
<comment type="catalytic activity">
    <reaction evidence="1">
        <text>5-(2-hydroxyethyl)-4-methylthiazole + ATP = 4-methyl-5-(2-phosphooxyethyl)-thiazole + ADP + H(+)</text>
        <dbReference type="Rhea" id="RHEA:24212"/>
        <dbReference type="ChEBI" id="CHEBI:15378"/>
        <dbReference type="ChEBI" id="CHEBI:17957"/>
        <dbReference type="ChEBI" id="CHEBI:30616"/>
        <dbReference type="ChEBI" id="CHEBI:58296"/>
        <dbReference type="ChEBI" id="CHEBI:456216"/>
        <dbReference type="EC" id="2.7.1.50"/>
    </reaction>
</comment>
<comment type="cofactor">
    <cofactor evidence="1">
        <name>Mg(2+)</name>
        <dbReference type="ChEBI" id="CHEBI:18420"/>
    </cofactor>
</comment>
<comment type="pathway">
    <text evidence="1">Cofactor biosynthesis; thiamine diphosphate biosynthesis; 4-methyl-5-(2-phosphoethyl)-thiazole from 5-(2-hydroxyethyl)-4-methylthiazole: step 1/1.</text>
</comment>
<comment type="similarity">
    <text evidence="1">Belongs to the Thz kinase family.</text>
</comment>
<evidence type="ECO:0000255" key="1">
    <source>
        <dbReference type="HAMAP-Rule" id="MF_00228"/>
    </source>
</evidence>
<accession>A5N1D3</accession>
<feature type="chain" id="PRO_0000336551" description="Hydroxyethylthiazole kinase">
    <location>
        <begin position="1"/>
        <end position="269"/>
    </location>
</feature>
<feature type="binding site" evidence="1">
    <location>
        <position position="48"/>
    </location>
    <ligand>
        <name>substrate</name>
    </ligand>
</feature>
<feature type="binding site" evidence="1">
    <location>
        <position position="124"/>
    </location>
    <ligand>
        <name>ATP</name>
        <dbReference type="ChEBI" id="CHEBI:30616"/>
    </ligand>
</feature>
<feature type="binding site" evidence="1">
    <location>
        <position position="170"/>
    </location>
    <ligand>
        <name>ATP</name>
        <dbReference type="ChEBI" id="CHEBI:30616"/>
    </ligand>
</feature>
<feature type="binding site" evidence="1">
    <location>
        <position position="197"/>
    </location>
    <ligand>
        <name>substrate</name>
    </ligand>
</feature>